<proteinExistence type="inferred from homology"/>
<keyword id="KW-0240">DNA-directed RNA polymerase</keyword>
<keyword id="KW-0460">Magnesium</keyword>
<keyword id="KW-0479">Metal-binding</keyword>
<keyword id="KW-0548">Nucleotidyltransferase</keyword>
<keyword id="KW-1185">Reference proteome</keyword>
<keyword id="KW-0804">Transcription</keyword>
<keyword id="KW-0808">Transferase</keyword>
<keyword id="KW-0862">Zinc</keyword>
<comment type="function">
    <text evidence="1">DNA-dependent RNA polymerase catalyzes the transcription of DNA into RNA using the four ribonucleoside triphosphates as substrates.</text>
</comment>
<comment type="catalytic activity">
    <reaction evidence="1">
        <text>RNA(n) + a ribonucleoside 5'-triphosphate = RNA(n+1) + diphosphate</text>
        <dbReference type="Rhea" id="RHEA:21248"/>
        <dbReference type="Rhea" id="RHEA-COMP:14527"/>
        <dbReference type="Rhea" id="RHEA-COMP:17342"/>
        <dbReference type="ChEBI" id="CHEBI:33019"/>
        <dbReference type="ChEBI" id="CHEBI:61557"/>
        <dbReference type="ChEBI" id="CHEBI:140395"/>
        <dbReference type="EC" id="2.7.7.6"/>
    </reaction>
</comment>
<comment type="cofactor">
    <cofactor evidence="1">
        <name>Mg(2+)</name>
        <dbReference type="ChEBI" id="CHEBI:18420"/>
    </cofactor>
    <text evidence="1">Binds 1 Mg(2+) ion per subunit.</text>
</comment>
<comment type="cofactor">
    <cofactor evidence="1">
        <name>Zn(2+)</name>
        <dbReference type="ChEBI" id="CHEBI:29105"/>
    </cofactor>
    <text evidence="1">Binds 2 Zn(2+) ions per subunit.</text>
</comment>
<comment type="subunit">
    <text evidence="1">The RNAP catalytic core consists of 2 alpha, 1 beta, 1 beta' and 1 omega subunit. When a sigma factor is associated with the core the holoenzyme is formed, which can initiate transcription.</text>
</comment>
<comment type="similarity">
    <text evidence="1">Belongs to the RNA polymerase beta' chain family.</text>
</comment>
<gene>
    <name evidence="1" type="primary">rpoC</name>
    <name type="ordered locus">Strop_3932</name>
</gene>
<sequence>MLDVNFFDELRIGLATADDIRQWSHGEVKKPETINYRTLKPEKDGLFCEKIFGPQRDWECYCGKYKRVRFKGIICERCGVEVTRSKVRRERMGHIELAASVTHIWYFKGVPSRLGYLLDLAPKDLEKIIYFASYVVTSVDAEARHRDLATIENEILAEKRQSENSRDSEIEKRAGKLEADLAELEAEGAKADVRRKVKEGGEREMRQIRDRAQREIDRLDEVLDTFRKLEPKQLVTDELLYRELRDRFGEYFTGGMGAEAIKALVQNMDLDAEAESLRETIRTGKGQRKIRALKRLKVVAAFLNTSNSPLGMVLDCVPVIPPDLRPMVQLDGGRFATSDLNDLYRRVINRNNRLKRLIDLGAPEIIVNNEKRMLQEAVDALFDNGRRGRPVTGPGNRPLKSLSDMLKGKQGRFRQNLLGKRVDYSGRSVIVVGPKLKLHQCGLPKQMALELFKPFVMKRLVDLNHAQNIKSAKRMVERQRPVVWDVLEEVIGEHPVLLNRAPTLHRLGIQAFEPQLVEGKAIQIHPLVCTAFNADFDGDQMAVHVPLSAEAQAEARILMLSSNNILKPADGKPVTMPTQDMIIGLYHLTHRTPGERGEGRAFSSDAEARMAFDNGELHLQAPVKIRLRGLVGVESGPGAEPWTAPEGWVEGDPITVETTLGRVLFNETLPPGYRFVNYEIRKGQLSAIVNDLAERFPKVALAATLDGLKEAGFHWATWSGVTIGMEDVLAPPRKREILGRYEKEADRIDKQYQRGLMTAEERRGELIEIWTKATNEVAKEMDTALPQENPLWKMINSGARGNLLQLRQIAAIRGLVANPKGEIIPRPIKASYREGLSVLEYFISTHGARKGLADTALRTADSGYLTRRLVDVSQDVIIREEDCGTDRAIPMQVGQQAGEAGSLVVHEHAETSVHARTLADDIKGPDGTVVAERGADINSILVDKIVAAGVESVRVRSVLTCESKLGVCGACYGRSLPTGKTVDVGEAVGIIAAQSIGEPGTQLTMRTFHTGGVAGEDITQGLPRVQEIFEARIPKGKAPIADTPGRVRIEDGERSRKIIVVPDDGSDEIAYDKISKRVRLLANDGDHVEVGERLTVGTIDPHELLRILGPRAVQVHLTQEVQEVYRSQGVLIHDKHIEIIIRQMLKRVTVIDSGSTEFLPGVLVDRALFESENRRLVSEGGEPAAGRPVLMGITKASLATDSWLSAASFQETTRVLTDAAIHARSDSLIGLKENVIIGKLIPAGTGISKYRNVRVEPTEEAKAKVYSMTGYPETDYGFGPASGQAVPLDDFDFGSYR</sequence>
<organism>
    <name type="scientific">Salinispora tropica (strain ATCC BAA-916 / DSM 44818 / JCM 13857 / NBRC 105044 / CNB-440)</name>
    <dbReference type="NCBI Taxonomy" id="369723"/>
    <lineage>
        <taxon>Bacteria</taxon>
        <taxon>Bacillati</taxon>
        <taxon>Actinomycetota</taxon>
        <taxon>Actinomycetes</taxon>
        <taxon>Micromonosporales</taxon>
        <taxon>Micromonosporaceae</taxon>
        <taxon>Salinispora</taxon>
    </lineage>
</organism>
<name>RPOC_SALTO</name>
<accession>A4XBQ5</accession>
<protein>
    <recommendedName>
        <fullName evidence="1">DNA-directed RNA polymerase subunit beta'</fullName>
        <shortName evidence="1">RNAP subunit beta'</shortName>
        <ecNumber evidence="1">2.7.7.6</ecNumber>
    </recommendedName>
    <alternativeName>
        <fullName evidence="1">RNA polymerase subunit beta'</fullName>
    </alternativeName>
    <alternativeName>
        <fullName evidence="1">Transcriptase subunit beta'</fullName>
    </alternativeName>
</protein>
<dbReference type="EC" id="2.7.7.6" evidence="1"/>
<dbReference type="EMBL" id="CP000667">
    <property type="protein sequence ID" value="ABP56362.1"/>
    <property type="molecule type" value="Genomic_DNA"/>
</dbReference>
<dbReference type="RefSeq" id="WP_012015132.1">
    <property type="nucleotide sequence ID" value="NC_009380.1"/>
</dbReference>
<dbReference type="SMR" id="A4XBQ5"/>
<dbReference type="STRING" id="369723.Strop_3932"/>
<dbReference type="KEGG" id="stp:Strop_3932"/>
<dbReference type="PATRIC" id="fig|369723.5.peg.4058"/>
<dbReference type="eggNOG" id="COG0086">
    <property type="taxonomic scope" value="Bacteria"/>
</dbReference>
<dbReference type="HOGENOM" id="CLU_000524_3_1_11"/>
<dbReference type="Proteomes" id="UP000000235">
    <property type="component" value="Chromosome"/>
</dbReference>
<dbReference type="GO" id="GO:0000428">
    <property type="term" value="C:DNA-directed RNA polymerase complex"/>
    <property type="evidence" value="ECO:0007669"/>
    <property type="project" value="UniProtKB-KW"/>
</dbReference>
<dbReference type="GO" id="GO:0003677">
    <property type="term" value="F:DNA binding"/>
    <property type="evidence" value="ECO:0007669"/>
    <property type="project" value="UniProtKB-UniRule"/>
</dbReference>
<dbReference type="GO" id="GO:0003899">
    <property type="term" value="F:DNA-directed RNA polymerase activity"/>
    <property type="evidence" value="ECO:0007669"/>
    <property type="project" value="UniProtKB-UniRule"/>
</dbReference>
<dbReference type="GO" id="GO:0000287">
    <property type="term" value="F:magnesium ion binding"/>
    <property type="evidence" value="ECO:0007669"/>
    <property type="project" value="UniProtKB-UniRule"/>
</dbReference>
<dbReference type="GO" id="GO:0008270">
    <property type="term" value="F:zinc ion binding"/>
    <property type="evidence" value="ECO:0007669"/>
    <property type="project" value="UniProtKB-UniRule"/>
</dbReference>
<dbReference type="GO" id="GO:0006351">
    <property type="term" value="P:DNA-templated transcription"/>
    <property type="evidence" value="ECO:0007669"/>
    <property type="project" value="UniProtKB-UniRule"/>
</dbReference>
<dbReference type="CDD" id="cd02655">
    <property type="entry name" value="RNAP_beta'_C"/>
    <property type="match status" value="1"/>
</dbReference>
<dbReference type="CDD" id="cd01609">
    <property type="entry name" value="RNAP_beta'_N"/>
    <property type="match status" value="1"/>
</dbReference>
<dbReference type="FunFam" id="1.10.150.390:FF:000002">
    <property type="entry name" value="DNA-directed RNA polymerase subunit beta"/>
    <property type="match status" value="1"/>
</dbReference>
<dbReference type="FunFam" id="1.10.40.90:FF:000001">
    <property type="entry name" value="DNA-directed RNA polymerase subunit beta"/>
    <property type="match status" value="1"/>
</dbReference>
<dbReference type="FunFam" id="4.10.860.120:FF:000001">
    <property type="entry name" value="DNA-directed RNA polymerase subunit beta"/>
    <property type="match status" value="1"/>
</dbReference>
<dbReference type="Gene3D" id="1.10.132.30">
    <property type="match status" value="1"/>
</dbReference>
<dbReference type="Gene3D" id="1.10.150.390">
    <property type="match status" value="1"/>
</dbReference>
<dbReference type="Gene3D" id="1.10.1790.20">
    <property type="match status" value="1"/>
</dbReference>
<dbReference type="Gene3D" id="1.10.40.90">
    <property type="match status" value="1"/>
</dbReference>
<dbReference type="Gene3D" id="2.40.40.20">
    <property type="match status" value="1"/>
</dbReference>
<dbReference type="Gene3D" id="2.40.50.100">
    <property type="match status" value="1"/>
</dbReference>
<dbReference type="Gene3D" id="4.10.860.120">
    <property type="entry name" value="RNA polymerase II, clamp domain"/>
    <property type="match status" value="1"/>
</dbReference>
<dbReference type="Gene3D" id="1.10.274.100">
    <property type="entry name" value="RNA polymerase Rpb1, domain 3"/>
    <property type="match status" value="1"/>
</dbReference>
<dbReference type="HAMAP" id="MF_01322">
    <property type="entry name" value="RNApol_bact_RpoC"/>
    <property type="match status" value="1"/>
</dbReference>
<dbReference type="InterPro" id="IPR045867">
    <property type="entry name" value="DNA-dir_RpoC_beta_prime"/>
</dbReference>
<dbReference type="InterPro" id="IPR012754">
    <property type="entry name" value="DNA-dir_RpoC_beta_prime_bact"/>
</dbReference>
<dbReference type="InterPro" id="IPR000722">
    <property type="entry name" value="RNA_pol_asu"/>
</dbReference>
<dbReference type="InterPro" id="IPR006592">
    <property type="entry name" value="RNA_pol_N"/>
</dbReference>
<dbReference type="InterPro" id="IPR007080">
    <property type="entry name" value="RNA_pol_Rpb1_1"/>
</dbReference>
<dbReference type="InterPro" id="IPR007066">
    <property type="entry name" value="RNA_pol_Rpb1_3"/>
</dbReference>
<dbReference type="InterPro" id="IPR042102">
    <property type="entry name" value="RNA_pol_Rpb1_3_sf"/>
</dbReference>
<dbReference type="InterPro" id="IPR007083">
    <property type="entry name" value="RNA_pol_Rpb1_4"/>
</dbReference>
<dbReference type="InterPro" id="IPR007081">
    <property type="entry name" value="RNA_pol_Rpb1_5"/>
</dbReference>
<dbReference type="InterPro" id="IPR044893">
    <property type="entry name" value="RNA_pol_Rpb1_clamp_domain"/>
</dbReference>
<dbReference type="InterPro" id="IPR038120">
    <property type="entry name" value="Rpb1_funnel_sf"/>
</dbReference>
<dbReference type="NCBIfam" id="NF011498">
    <property type="entry name" value="PRK14906.1"/>
    <property type="match status" value="1"/>
</dbReference>
<dbReference type="NCBIfam" id="TIGR02386">
    <property type="entry name" value="rpoC_TIGR"/>
    <property type="match status" value="1"/>
</dbReference>
<dbReference type="PANTHER" id="PTHR19376">
    <property type="entry name" value="DNA-DIRECTED RNA POLYMERASE"/>
    <property type="match status" value="1"/>
</dbReference>
<dbReference type="PANTHER" id="PTHR19376:SF54">
    <property type="entry name" value="DNA-DIRECTED RNA POLYMERASE SUBUNIT BETA"/>
    <property type="match status" value="1"/>
</dbReference>
<dbReference type="Pfam" id="PF04997">
    <property type="entry name" value="RNA_pol_Rpb1_1"/>
    <property type="match status" value="1"/>
</dbReference>
<dbReference type="Pfam" id="PF00623">
    <property type="entry name" value="RNA_pol_Rpb1_2"/>
    <property type="match status" value="2"/>
</dbReference>
<dbReference type="Pfam" id="PF04983">
    <property type="entry name" value="RNA_pol_Rpb1_3"/>
    <property type="match status" value="1"/>
</dbReference>
<dbReference type="Pfam" id="PF05000">
    <property type="entry name" value="RNA_pol_Rpb1_4"/>
    <property type="match status" value="1"/>
</dbReference>
<dbReference type="Pfam" id="PF04998">
    <property type="entry name" value="RNA_pol_Rpb1_5"/>
    <property type="match status" value="1"/>
</dbReference>
<dbReference type="SMART" id="SM00663">
    <property type="entry name" value="RPOLA_N"/>
    <property type="match status" value="1"/>
</dbReference>
<dbReference type="SUPFAM" id="SSF64484">
    <property type="entry name" value="beta and beta-prime subunits of DNA dependent RNA-polymerase"/>
    <property type="match status" value="1"/>
</dbReference>
<evidence type="ECO:0000255" key="1">
    <source>
        <dbReference type="HAMAP-Rule" id="MF_01322"/>
    </source>
</evidence>
<reference key="1">
    <citation type="journal article" date="2007" name="Proc. Natl. Acad. Sci. U.S.A.">
        <title>Genome sequencing reveals complex secondary metabolome in the marine actinomycete Salinispora tropica.</title>
        <authorList>
            <person name="Udwary D.W."/>
            <person name="Zeigler L."/>
            <person name="Asolkar R.N."/>
            <person name="Singan V."/>
            <person name="Lapidus A."/>
            <person name="Fenical W."/>
            <person name="Jensen P.R."/>
            <person name="Moore B.S."/>
        </authorList>
    </citation>
    <scope>NUCLEOTIDE SEQUENCE [LARGE SCALE GENOMIC DNA]</scope>
    <source>
        <strain>ATCC BAA-916 / DSM 44818 / JCM 13857 / NBRC 105044 / CNB-440</strain>
    </source>
</reference>
<feature type="chain" id="PRO_1000086413" description="DNA-directed RNA polymerase subunit beta'">
    <location>
        <begin position="1"/>
        <end position="1297"/>
    </location>
</feature>
<feature type="binding site" evidence="1">
    <location>
        <position position="60"/>
    </location>
    <ligand>
        <name>Zn(2+)</name>
        <dbReference type="ChEBI" id="CHEBI:29105"/>
        <label>1</label>
    </ligand>
</feature>
<feature type="binding site" evidence="1">
    <location>
        <position position="62"/>
    </location>
    <ligand>
        <name>Zn(2+)</name>
        <dbReference type="ChEBI" id="CHEBI:29105"/>
        <label>1</label>
    </ligand>
</feature>
<feature type="binding site" evidence="1">
    <location>
        <position position="75"/>
    </location>
    <ligand>
        <name>Zn(2+)</name>
        <dbReference type="ChEBI" id="CHEBI:29105"/>
        <label>1</label>
    </ligand>
</feature>
<feature type="binding site" evidence="1">
    <location>
        <position position="78"/>
    </location>
    <ligand>
        <name>Zn(2+)</name>
        <dbReference type="ChEBI" id="CHEBI:29105"/>
        <label>1</label>
    </ligand>
</feature>
<feature type="binding site" evidence="1">
    <location>
        <position position="535"/>
    </location>
    <ligand>
        <name>Mg(2+)</name>
        <dbReference type="ChEBI" id="CHEBI:18420"/>
    </ligand>
</feature>
<feature type="binding site" evidence="1">
    <location>
        <position position="537"/>
    </location>
    <ligand>
        <name>Mg(2+)</name>
        <dbReference type="ChEBI" id="CHEBI:18420"/>
    </ligand>
</feature>
<feature type="binding site" evidence="1">
    <location>
        <position position="539"/>
    </location>
    <ligand>
        <name>Mg(2+)</name>
        <dbReference type="ChEBI" id="CHEBI:18420"/>
    </ligand>
</feature>
<feature type="binding site" evidence="1">
    <location>
        <position position="883"/>
    </location>
    <ligand>
        <name>Zn(2+)</name>
        <dbReference type="ChEBI" id="CHEBI:29105"/>
        <label>2</label>
    </ligand>
</feature>
<feature type="binding site" evidence="1">
    <location>
        <position position="961"/>
    </location>
    <ligand>
        <name>Zn(2+)</name>
        <dbReference type="ChEBI" id="CHEBI:29105"/>
        <label>2</label>
    </ligand>
</feature>
<feature type="binding site" evidence="1">
    <location>
        <position position="968"/>
    </location>
    <ligand>
        <name>Zn(2+)</name>
        <dbReference type="ChEBI" id="CHEBI:29105"/>
        <label>2</label>
    </ligand>
</feature>
<feature type="binding site" evidence="1">
    <location>
        <position position="971"/>
    </location>
    <ligand>
        <name>Zn(2+)</name>
        <dbReference type="ChEBI" id="CHEBI:29105"/>
        <label>2</label>
    </ligand>
</feature>